<proteinExistence type="inferred from homology"/>
<feature type="chain" id="PRO_0000235416" description="Holliday junction branch migration complex subunit RuvB">
    <location>
        <begin position="1"/>
        <end position="348"/>
    </location>
</feature>
<feature type="region of interest" description="Disordered" evidence="2">
    <location>
        <begin position="1"/>
        <end position="37"/>
    </location>
</feature>
<feature type="region of interest" description="Large ATPase domain (RuvB-L)" evidence="1">
    <location>
        <begin position="13"/>
        <end position="198"/>
    </location>
</feature>
<feature type="region of interest" description="Small ATPAse domain (RuvB-S)" evidence="1">
    <location>
        <begin position="199"/>
        <end position="271"/>
    </location>
</feature>
<feature type="region of interest" description="Head domain (RuvB-H)" evidence="1">
    <location>
        <begin position="274"/>
        <end position="348"/>
    </location>
</feature>
<feature type="compositionally biased region" description="Low complexity" evidence="2">
    <location>
        <begin position="1"/>
        <end position="10"/>
    </location>
</feature>
<feature type="binding site" evidence="1">
    <location>
        <position position="37"/>
    </location>
    <ligand>
        <name>ATP</name>
        <dbReference type="ChEBI" id="CHEBI:30616"/>
    </ligand>
</feature>
<feature type="binding site" evidence="1">
    <location>
        <position position="38"/>
    </location>
    <ligand>
        <name>ATP</name>
        <dbReference type="ChEBI" id="CHEBI:30616"/>
    </ligand>
</feature>
<feature type="binding site" evidence="1">
    <location>
        <position position="79"/>
    </location>
    <ligand>
        <name>ATP</name>
        <dbReference type="ChEBI" id="CHEBI:30616"/>
    </ligand>
</feature>
<feature type="binding site" evidence="1">
    <location>
        <position position="82"/>
    </location>
    <ligand>
        <name>ATP</name>
        <dbReference type="ChEBI" id="CHEBI:30616"/>
    </ligand>
</feature>
<feature type="binding site" evidence="1">
    <location>
        <position position="83"/>
    </location>
    <ligand>
        <name>ATP</name>
        <dbReference type="ChEBI" id="CHEBI:30616"/>
    </ligand>
</feature>
<feature type="binding site" evidence="1">
    <location>
        <position position="83"/>
    </location>
    <ligand>
        <name>Mg(2+)</name>
        <dbReference type="ChEBI" id="CHEBI:18420"/>
    </ligand>
</feature>
<feature type="binding site" evidence="1">
    <location>
        <position position="84"/>
    </location>
    <ligand>
        <name>ATP</name>
        <dbReference type="ChEBI" id="CHEBI:30616"/>
    </ligand>
</feature>
<feature type="binding site" evidence="1">
    <location>
        <position position="188"/>
    </location>
    <ligand>
        <name>ATP</name>
        <dbReference type="ChEBI" id="CHEBI:30616"/>
    </ligand>
</feature>
<feature type="binding site" evidence="1">
    <location>
        <position position="198"/>
    </location>
    <ligand>
        <name>ATP</name>
        <dbReference type="ChEBI" id="CHEBI:30616"/>
    </ligand>
</feature>
<feature type="binding site" evidence="1">
    <location>
        <position position="235"/>
    </location>
    <ligand>
        <name>ATP</name>
        <dbReference type="ChEBI" id="CHEBI:30616"/>
    </ligand>
</feature>
<feature type="binding site" evidence="1">
    <location>
        <position position="329"/>
    </location>
    <ligand>
        <name>DNA</name>
        <dbReference type="ChEBI" id="CHEBI:16991"/>
    </ligand>
</feature>
<feature type="binding site" evidence="1">
    <location>
        <position position="334"/>
    </location>
    <ligand>
        <name>DNA</name>
        <dbReference type="ChEBI" id="CHEBI:16991"/>
    </ligand>
</feature>
<dbReference type="EC" id="3.6.4.-" evidence="1"/>
<dbReference type="EMBL" id="CP000110">
    <property type="protein sequence ID" value="ABB33894.1"/>
    <property type="molecule type" value="Genomic_DNA"/>
</dbReference>
<dbReference type="RefSeq" id="WP_011363153.1">
    <property type="nucleotide sequence ID" value="NC_007516.1"/>
</dbReference>
<dbReference type="SMR" id="Q3AND8"/>
<dbReference type="STRING" id="110662.Syncc9605_0118"/>
<dbReference type="KEGG" id="syd:Syncc9605_0118"/>
<dbReference type="eggNOG" id="COG2255">
    <property type="taxonomic scope" value="Bacteria"/>
</dbReference>
<dbReference type="HOGENOM" id="CLU_055599_1_0_3"/>
<dbReference type="OrthoDB" id="9804478at2"/>
<dbReference type="GO" id="GO:0005737">
    <property type="term" value="C:cytoplasm"/>
    <property type="evidence" value="ECO:0007669"/>
    <property type="project" value="UniProtKB-SubCell"/>
</dbReference>
<dbReference type="GO" id="GO:0048476">
    <property type="term" value="C:Holliday junction resolvase complex"/>
    <property type="evidence" value="ECO:0007669"/>
    <property type="project" value="UniProtKB-UniRule"/>
</dbReference>
<dbReference type="GO" id="GO:0005524">
    <property type="term" value="F:ATP binding"/>
    <property type="evidence" value="ECO:0007669"/>
    <property type="project" value="UniProtKB-UniRule"/>
</dbReference>
<dbReference type="GO" id="GO:0016887">
    <property type="term" value="F:ATP hydrolysis activity"/>
    <property type="evidence" value="ECO:0007669"/>
    <property type="project" value="InterPro"/>
</dbReference>
<dbReference type="GO" id="GO:0000400">
    <property type="term" value="F:four-way junction DNA binding"/>
    <property type="evidence" value="ECO:0007669"/>
    <property type="project" value="UniProtKB-UniRule"/>
</dbReference>
<dbReference type="GO" id="GO:0009378">
    <property type="term" value="F:four-way junction helicase activity"/>
    <property type="evidence" value="ECO:0007669"/>
    <property type="project" value="InterPro"/>
</dbReference>
<dbReference type="GO" id="GO:0006310">
    <property type="term" value="P:DNA recombination"/>
    <property type="evidence" value="ECO:0007669"/>
    <property type="project" value="UniProtKB-UniRule"/>
</dbReference>
<dbReference type="GO" id="GO:0006281">
    <property type="term" value="P:DNA repair"/>
    <property type="evidence" value="ECO:0007669"/>
    <property type="project" value="UniProtKB-UniRule"/>
</dbReference>
<dbReference type="CDD" id="cd00009">
    <property type="entry name" value="AAA"/>
    <property type="match status" value="1"/>
</dbReference>
<dbReference type="Gene3D" id="1.10.8.60">
    <property type="match status" value="1"/>
</dbReference>
<dbReference type="Gene3D" id="3.40.50.300">
    <property type="entry name" value="P-loop containing nucleotide triphosphate hydrolases"/>
    <property type="match status" value="1"/>
</dbReference>
<dbReference type="Gene3D" id="1.10.10.10">
    <property type="entry name" value="Winged helix-like DNA-binding domain superfamily/Winged helix DNA-binding domain"/>
    <property type="match status" value="1"/>
</dbReference>
<dbReference type="HAMAP" id="MF_00016">
    <property type="entry name" value="DNA_HJ_migration_RuvB"/>
    <property type="match status" value="1"/>
</dbReference>
<dbReference type="InterPro" id="IPR003593">
    <property type="entry name" value="AAA+_ATPase"/>
</dbReference>
<dbReference type="InterPro" id="IPR041445">
    <property type="entry name" value="AAA_lid_4"/>
</dbReference>
<dbReference type="InterPro" id="IPR004605">
    <property type="entry name" value="DNA_helicase_Holl-junc_RuvB"/>
</dbReference>
<dbReference type="InterPro" id="IPR027417">
    <property type="entry name" value="P-loop_NTPase"/>
</dbReference>
<dbReference type="InterPro" id="IPR008824">
    <property type="entry name" value="RuvB-like_N"/>
</dbReference>
<dbReference type="InterPro" id="IPR008823">
    <property type="entry name" value="RuvB_C"/>
</dbReference>
<dbReference type="InterPro" id="IPR036388">
    <property type="entry name" value="WH-like_DNA-bd_sf"/>
</dbReference>
<dbReference type="InterPro" id="IPR036390">
    <property type="entry name" value="WH_DNA-bd_sf"/>
</dbReference>
<dbReference type="NCBIfam" id="NF000868">
    <property type="entry name" value="PRK00080.1"/>
    <property type="match status" value="1"/>
</dbReference>
<dbReference type="NCBIfam" id="TIGR00635">
    <property type="entry name" value="ruvB"/>
    <property type="match status" value="1"/>
</dbReference>
<dbReference type="PANTHER" id="PTHR42848">
    <property type="match status" value="1"/>
</dbReference>
<dbReference type="PANTHER" id="PTHR42848:SF1">
    <property type="entry name" value="HOLLIDAY JUNCTION BRANCH MIGRATION COMPLEX SUBUNIT RUVB"/>
    <property type="match status" value="1"/>
</dbReference>
<dbReference type="Pfam" id="PF17864">
    <property type="entry name" value="AAA_lid_4"/>
    <property type="match status" value="1"/>
</dbReference>
<dbReference type="Pfam" id="PF05491">
    <property type="entry name" value="RuvB_C"/>
    <property type="match status" value="1"/>
</dbReference>
<dbReference type="Pfam" id="PF05496">
    <property type="entry name" value="RuvB_N"/>
    <property type="match status" value="1"/>
</dbReference>
<dbReference type="SMART" id="SM00382">
    <property type="entry name" value="AAA"/>
    <property type="match status" value="1"/>
</dbReference>
<dbReference type="SUPFAM" id="SSF52540">
    <property type="entry name" value="P-loop containing nucleoside triphosphate hydrolases"/>
    <property type="match status" value="1"/>
</dbReference>
<dbReference type="SUPFAM" id="SSF46785">
    <property type="entry name" value="Winged helix' DNA-binding domain"/>
    <property type="match status" value="1"/>
</dbReference>
<sequence length="348" mass="37521">MAIVSSSSGRKPPRRPEALMDPQQAPEEVVSRPEDKLRPQRLDDYIGQSELKQVLGIAVQAALGRGDALDHVLLYGPPGLGKTTMAMVLAEEMGVHCKVTSAPALERPRDIVGLLVNLQPRDLLFIDEIHRLSRVAEELLYPAMEDRRLDLTVGKGSTARTRSLDLPPFTLVGATTRAGSLSSPLRDRFGLIQRLEFYGQGDLEAIVERTAGLIGVTLTPQARSSIAASCRGTPRIANRLLRRVRDVASVRGGGGGAINQALVGEALSLHRVDHRGLDASDRRLLQLLIDHHGGGPVGLETLAAALGDDPVTLETVVEPFLMQQGLLMRTPRGRMVTDAARSHLAEAA</sequence>
<organism>
    <name type="scientific">Synechococcus sp. (strain CC9605)</name>
    <dbReference type="NCBI Taxonomy" id="110662"/>
    <lineage>
        <taxon>Bacteria</taxon>
        <taxon>Bacillati</taxon>
        <taxon>Cyanobacteriota</taxon>
        <taxon>Cyanophyceae</taxon>
        <taxon>Synechococcales</taxon>
        <taxon>Synechococcaceae</taxon>
        <taxon>Synechococcus</taxon>
    </lineage>
</organism>
<name>RUVB_SYNSC</name>
<accession>Q3AND8</accession>
<protein>
    <recommendedName>
        <fullName evidence="1">Holliday junction branch migration complex subunit RuvB</fullName>
        <ecNumber evidence="1">3.6.4.-</ecNumber>
    </recommendedName>
</protein>
<gene>
    <name evidence="1" type="primary">ruvB</name>
    <name type="ordered locus">Syncc9605_0118</name>
</gene>
<reference key="1">
    <citation type="submission" date="2005-07" db="EMBL/GenBank/DDBJ databases">
        <title>Complete sequence of Synechococcus sp. CC9605.</title>
        <authorList>
            <consortium name="US DOE Joint Genome Institute"/>
            <person name="Copeland A."/>
            <person name="Lucas S."/>
            <person name="Lapidus A."/>
            <person name="Barry K."/>
            <person name="Detter J.C."/>
            <person name="Glavina T."/>
            <person name="Hammon N."/>
            <person name="Israni S."/>
            <person name="Pitluck S."/>
            <person name="Schmutz J."/>
            <person name="Martinez M."/>
            <person name="Larimer F."/>
            <person name="Land M."/>
            <person name="Kyrpides N."/>
            <person name="Ivanova N."/>
            <person name="Richardson P."/>
        </authorList>
    </citation>
    <scope>NUCLEOTIDE SEQUENCE [LARGE SCALE GENOMIC DNA]</scope>
    <source>
        <strain>CC9605</strain>
    </source>
</reference>
<evidence type="ECO:0000255" key="1">
    <source>
        <dbReference type="HAMAP-Rule" id="MF_00016"/>
    </source>
</evidence>
<evidence type="ECO:0000256" key="2">
    <source>
        <dbReference type="SAM" id="MobiDB-lite"/>
    </source>
</evidence>
<comment type="function">
    <text evidence="1">The RuvA-RuvB-RuvC complex processes Holliday junction (HJ) DNA during genetic recombination and DNA repair, while the RuvA-RuvB complex plays an important role in the rescue of blocked DNA replication forks via replication fork reversal (RFR). RuvA specifically binds to HJ cruciform DNA, conferring on it an open structure. The RuvB hexamer acts as an ATP-dependent pump, pulling dsDNA into and through the RuvAB complex. RuvB forms 2 homohexamers on either side of HJ DNA bound by 1 or 2 RuvA tetramers; 4 subunits per hexamer contact DNA at a time. Coordinated motions by a converter formed by DNA-disengaged RuvB subunits stimulates ATP hydrolysis and nucleotide exchange. Immobilization of the converter enables RuvB to convert the ATP-contained energy into a lever motion, pulling 2 nucleotides of DNA out of the RuvA tetramer per ATP hydrolyzed, thus driving DNA branch migration. The RuvB motors rotate together with the DNA substrate, which together with the progressing nucleotide cycle form the mechanistic basis for DNA recombination by continuous HJ branch migration. Branch migration allows RuvC to scan DNA until it finds its consensus sequence, where it cleaves and resolves cruciform DNA.</text>
</comment>
<comment type="catalytic activity">
    <reaction evidence="1">
        <text>ATP + H2O = ADP + phosphate + H(+)</text>
        <dbReference type="Rhea" id="RHEA:13065"/>
        <dbReference type="ChEBI" id="CHEBI:15377"/>
        <dbReference type="ChEBI" id="CHEBI:15378"/>
        <dbReference type="ChEBI" id="CHEBI:30616"/>
        <dbReference type="ChEBI" id="CHEBI:43474"/>
        <dbReference type="ChEBI" id="CHEBI:456216"/>
    </reaction>
</comment>
<comment type="subunit">
    <text evidence="1">Homohexamer. Forms an RuvA(8)-RuvB(12)-Holliday junction (HJ) complex. HJ DNA is sandwiched between 2 RuvA tetramers; dsDNA enters through RuvA and exits via RuvB. An RuvB hexamer assembles on each DNA strand where it exits the tetramer. Each RuvB hexamer is contacted by two RuvA subunits (via domain III) on 2 adjacent RuvB subunits; this complex drives branch migration. In the full resolvosome a probable DNA-RuvA(4)-RuvB(12)-RuvC(2) complex forms which resolves the HJ.</text>
</comment>
<comment type="subcellular location">
    <subcellularLocation>
        <location evidence="1">Cytoplasm</location>
    </subcellularLocation>
</comment>
<comment type="domain">
    <text evidence="1">Has 3 domains, the large (RuvB-L) and small ATPase (RuvB-S) domains and the C-terminal head (RuvB-H) domain. The head domain binds DNA, while the ATPase domains jointly bind ATP, ADP or are empty depending on the state of the subunit in the translocation cycle. During a single DNA translocation step the structure of each domain remains the same, but their relative positions change.</text>
</comment>
<comment type="similarity">
    <text evidence="1">Belongs to the RuvB family.</text>
</comment>
<keyword id="KW-0067">ATP-binding</keyword>
<keyword id="KW-0963">Cytoplasm</keyword>
<keyword id="KW-0227">DNA damage</keyword>
<keyword id="KW-0233">DNA recombination</keyword>
<keyword id="KW-0234">DNA repair</keyword>
<keyword id="KW-0238">DNA-binding</keyword>
<keyword id="KW-0378">Hydrolase</keyword>
<keyword id="KW-0547">Nucleotide-binding</keyword>